<comment type="function">
    <text evidence="1 3">Subunit e, of the mitochondrial membrane ATP synthase complex (F(1)F(0) ATP synthase or Complex V) that produces ATP from ADP in the presence of a proton gradient across the membrane which is generated by electron transport complexes of the respiratory chain. ATP synthase complex consist of a soluble F(1) head domain - the catalytic core - and a membrane F(1) domain - the membrane proton channel. These two domains are linked by a central stalk rotating inside the F(1) region and a stationary peripheral stalk. During catalysis, ATP synthesis in the catalytic domain of F(1) is coupled via a rotary mechanism of the central stalk subunits to proton translocation (By similarity). In vivo, can only synthesize ATP although its ATP hydrolase activity can be activated artificially in vitro (By similarity). Part of the complex F(0) domain (By similarity).</text>
</comment>
<comment type="subunit">
    <text evidence="3">Component of the ATP synthase complex composed at least of ATP5F1A/subunit alpha, ATP5F1B/subunit beta, ATP5MC1/subunit c (homooctomer), MT-ATP6/subunit a, MT-ATP8/subunit 8, ATP5ME/subunit e, ATP5MF/subunit f, ATP5MG/subunit g, ATP5MK/subunit k, ATP5MJ/subunit j, ATP5F1C/subunit gamma, ATP5F1D/subunit delta, ATP5F1E/subunit epsilon, ATP5PF/subunit F6, ATP5PB/subunit b, ATP5PD/subunit d, ATP5PO/subunit OSCP. ATP synthase complex consists of a soluble F(1) head domain (subunits alpha(3) and beta(3)) - the catalytic core - and a membrane F(0) domain - the membrane proton channel (subunits c, a, 8, e, f, g, k and j). These two domains are linked by a central stalk (subunits gamma, delta, and epsilon) rotating inside the F1 region and a stationary peripheral stalk (subunits F6, b, d, and OSCP).</text>
</comment>
<comment type="subcellular location">
    <subcellularLocation>
        <location>Mitochondrion</location>
    </subcellularLocation>
    <subcellularLocation>
        <location>Mitochondrion inner membrane</location>
    </subcellularLocation>
</comment>
<comment type="similarity">
    <text evidence="5">Belongs to the ATPase e subunit family.</text>
</comment>
<reference key="1">
    <citation type="submission" date="2004-11" db="EMBL/GenBank/DDBJ databases">
        <authorList>
            <consortium name="The German cDNA consortium"/>
        </authorList>
    </citation>
    <scope>NUCLEOTIDE SEQUENCE [LARGE SCALE MRNA]</scope>
    <source>
        <tissue>Heart</tissue>
        <tissue>Kidney</tissue>
    </source>
</reference>
<evidence type="ECO:0000250" key="1">
    <source>
        <dbReference type="UniProtKB" id="P19483"/>
    </source>
</evidence>
<evidence type="ECO:0000250" key="2">
    <source>
        <dbReference type="UniProtKB" id="P29419"/>
    </source>
</evidence>
<evidence type="ECO:0000250" key="3">
    <source>
        <dbReference type="UniProtKB" id="P56385"/>
    </source>
</evidence>
<evidence type="ECO:0000250" key="4">
    <source>
        <dbReference type="UniProtKB" id="Q06185"/>
    </source>
</evidence>
<evidence type="ECO:0000305" key="5"/>
<keyword id="KW-0007">Acetylation</keyword>
<keyword id="KW-0066">ATP synthesis</keyword>
<keyword id="KW-0138">CF(0)</keyword>
<keyword id="KW-0375">Hydrogen ion transport</keyword>
<keyword id="KW-0406">Ion transport</keyword>
<keyword id="KW-0472">Membrane</keyword>
<keyword id="KW-0496">Mitochondrion</keyword>
<keyword id="KW-0999">Mitochondrion inner membrane</keyword>
<keyword id="KW-0597">Phosphoprotein</keyword>
<keyword id="KW-1185">Reference proteome</keyword>
<keyword id="KW-0813">Transport</keyword>
<sequence>MVPPVQVSPLIKLGRYSALFLGVAYGATRYNYLKPRAEEERRIAAEEKKKQDELKRIARELAEAQDDSILK</sequence>
<protein>
    <recommendedName>
        <fullName evidence="3">ATP synthase F(0) complex subunit e, mitochondrial</fullName>
        <shortName>ATPase subunit e</shortName>
    </recommendedName>
    <alternativeName>
        <fullName evidence="5">ATP synthase membrane subunit e</fullName>
    </alternativeName>
</protein>
<feature type="chain" id="PRO_0000071687" description="ATP synthase F(0) complex subunit e, mitochondrial">
    <location>
        <begin position="1"/>
        <end position="71"/>
    </location>
</feature>
<feature type="modified residue" description="N6-acetyllysine" evidence="4">
    <location>
        <position position="34"/>
    </location>
</feature>
<feature type="modified residue" description="Phosphoserine" evidence="2">
    <location>
        <position position="68"/>
    </location>
</feature>
<organism>
    <name type="scientific">Pongo abelii</name>
    <name type="common">Sumatran orangutan</name>
    <name type="synonym">Pongo pygmaeus abelii</name>
    <dbReference type="NCBI Taxonomy" id="9601"/>
    <lineage>
        <taxon>Eukaryota</taxon>
        <taxon>Metazoa</taxon>
        <taxon>Chordata</taxon>
        <taxon>Craniata</taxon>
        <taxon>Vertebrata</taxon>
        <taxon>Euteleostomi</taxon>
        <taxon>Mammalia</taxon>
        <taxon>Eutheria</taxon>
        <taxon>Euarchontoglires</taxon>
        <taxon>Primates</taxon>
        <taxon>Haplorrhini</taxon>
        <taxon>Catarrhini</taxon>
        <taxon>Hominidae</taxon>
        <taxon>Pongo</taxon>
    </lineage>
</organism>
<accession>Q5RBW2</accession>
<name>ATP5I_PONAB</name>
<proteinExistence type="inferred from homology"/>
<gene>
    <name evidence="3" type="primary">ATP5ME</name>
    <name type="synonym">ATP5I</name>
</gene>
<dbReference type="EMBL" id="CR857527">
    <property type="protein sequence ID" value="CAH89809.1"/>
    <property type="molecule type" value="mRNA"/>
</dbReference>
<dbReference type="EMBL" id="CR858521">
    <property type="protein sequence ID" value="CAH90748.1"/>
    <property type="molecule type" value="mRNA"/>
</dbReference>
<dbReference type="RefSeq" id="NP_001124837.1">
    <property type="nucleotide sequence ID" value="NM_001131365.1"/>
</dbReference>
<dbReference type="SMR" id="Q5RBW2"/>
<dbReference type="FunCoup" id="Q5RBW2">
    <property type="interactions" value="1326"/>
</dbReference>
<dbReference type="STRING" id="9601.ENSPPYP00000016213"/>
<dbReference type="Ensembl" id="ENSPPYT00000016866.2">
    <property type="protein sequence ID" value="ENSPPYP00000016213.1"/>
    <property type="gene ID" value="ENSPPYG00000014505.2"/>
</dbReference>
<dbReference type="GeneID" id="100171695"/>
<dbReference type="KEGG" id="pon:100171695"/>
<dbReference type="CTD" id="521"/>
<dbReference type="eggNOG" id="KOG4326">
    <property type="taxonomic scope" value="Eukaryota"/>
</dbReference>
<dbReference type="GeneTree" id="ENSGT00390000005102"/>
<dbReference type="HOGENOM" id="CLU_180903_0_0_1"/>
<dbReference type="InParanoid" id="Q5RBW2"/>
<dbReference type="OMA" id="CWRIFET"/>
<dbReference type="OrthoDB" id="9982108at2759"/>
<dbReference type="TreeFam" id="TF314719"/>
<dbReference type="Proteomes" id="UP000001595">
    <property type="component" value="Chromosome 4"/>
</dbReference>
<dbReference type="GO" id="GO:0005743">
    <property type="term" value="C:mitochondrial inner membrane"/>
    <property type="evidence" value="ECO:0007669"/>
    <property type="project" value="UniProtKB-SubCell"/>
</dbReference>
<dbReference type="GO" id="GO:0045259">
    <property type="term" value="C:proton-transporting ATP synthase complex"/>
    <property type="evidence" value="ECO:0000250"/>
    <property type="project" value="UniProtKB"/>
</dbReference>
<dbReference type="GO" id="GO:0046933">
    <property type="term" value="F:proton-transporting ATP synthase activity, rotational mechanism"/>
    <property type="evidence" value="ECO:0007669"/>
    <property type="project" value="Ensembl"/>
</dbReference>
<dbReference type="GO" id="GO:0042776">
    <property type="term" value="P:proton motive force-driven mitochondrial ATP synthesis"/>
    <property type="evidence" value="ECO:0007669"/>
    <property type="project" value="Ensembl"/>
</dbReference>
<dbReference type="InterPro" id="IPR008386">
    <property type="entry name" value="ATP_synth_F0_esu_mt"/>
</dbReference>
<dbReference type="PANTHER" id="PTHR12427">
    <property type="entry name" value="ATP SYNTHASE E CHAIN, MITOCHONDRIAL"/>
    <property type="match status" value="1"/>
</dbReference>
<dbReference type="PANTHER" id="PTHR12427:SF1">
    <property type="entry name" value="ATP SYNTHASE SUBUNIT E, MITOCHONDRIAL"/>
    <property type="match status" value="1"/>
</dbReference>
<dbReference type="Pfam" id="PF05680">
    <property type="entry name" value="ATP-synt_E"/>
    <property type="match status" value="1"/>
</dbReference>